<comment type="function">
    <text evidence="1">Component of SCF(ASK-cullin-F-box) E3 ubiquitin ligase complexes, which may mediate the ubiquitination and subsequent proteasomal degradation of target proteins.</text>
</comment>
<comment type="pathway">
    <text>Protein modification; protein ubiquitination.</text>
</comment>
<comment type="subunit">
    <text evidence="1 3 4">Part of a SCF (ASK-cullin-F-box) protein ligase complex (By similarity). Interacts with SKP1A/ASK1, SKP1B/ASK2, ASK5, ASK11 and ASK13.</text>
</comment>
<comment type="interaction">
    <interactant intactId="EBI-604261">
        <id>Q9LEX0</id>
    </interactant>
    <interactant intactId="EBI-532357">
        <id>Q39255</id>
        <label>SKP1A</label>
    </interactant>
    <organismsDiffer>false</organismsDiffer>
    <experiments>4</experiments>
</comment>
<comment type="interaction">
    <interactant intactId="EBI-604261">
        <id>Q9LEX0</id>
    </interactant>
    <interactant intactId="EBI-604076">
        <id>Q9FHW7</id>
        <label>SKP1B</label>
    </interactant>
    <organismsDiffer>false</organismsDiffer>
    <experiments>6</experiments>
</comment>
<comment type="subcellular location">
    <subcellularLocation>
        <location evidence="1">Nucleus</location>
    </subcellularLocation>
</comment>
<comment type="alternative products">
    <event type="alternative splicing"/>
    <isoform>
        <id>Q9LEX0-1</id>
        <name>1</name>
        <sequence type="displayed"/>
    </isoform>
    <text>A number of isoforms are produced. According to EST sequences.</text>
</comment>
<comment type="domain">
    <text evidence="1">The F-box is necessary for the interaction with ASK proteins.</text>
</comment>
<gene>
    <name type="primary">PP2A13</name>
    <name type="synonym">SKIP9</name>
    <name type="ordered locus">At3g61060</name>
    <name type="ORF">T27I15.150</name>
</gene>
<proteinExistence type="evidence at protein level"/>
<keyword id="KW-0025">Alternative splicing</keyword>
<keyword id="KW-0539">Nucleus</keyword>
<keyword id="KW-1185">Reference proteome</keyword>
<keyword id="KW-0833">Ubl conjugation pathway</keyword>
<sequence>MGANISGGSPEFDRNDDVYSRKLRLVDLPENCVALIMTRLDPPEICRLARLNRMFRRASSADFIWESKLPANYRVIAHKVFDEITLTKLIKKDLYAKLSQPNLFDDGTKELWIDKNTGRLCLSISSKALRITGIDDRRYWSHIPTDESRFQSAAYVQQIWWFEVGGEFEIQFPSGTYSLFFRIQLGKTSKRLGRRICNSEHIHGWDIKPVRFQLATSDNQQAVSLCYLNNNPGSWSHYHVGDFKVTNPDVSTGIKFSMTQIDCTHTKGGLCIDSVLILPKECAKEVIGSQ</sequence>
<reference key="1">
    <citation type="journal article" date="2000" name="Nature">
        <title>Sequence and analysis of chromosome 3 of the plant Arabidopsis thaliana.</title>
        <authorList>
            <person name="Salanoubat M."/>
            <person name="Lemcke K."/>
            <person name="Rieger M."/>
            <person name="Ansorge W."/>
            <person name="Unseld M."/>
            <person name="Fartmann B."/>
            <person name="Valle G."/>
            <person name="Bloecker H."/>
            <person name="Perez-Alonso M."/>
            <person name="Obermaier B."/>
            <person name="Delseny M."/>
            <person name="Boutry M."/>
            <person name="Grivell L.A."/>
            <person name="Mache R."/>
            <person name="Puigdomenech P."/>
            <person name="De Simone V."/>
            <person name="Choisne N."/>
            <person name="Artiguenave F."/>
            <person name="Robert C."/>
            <person name="Brottier P."/>
            <person name="Wincker P."/>
            <person name="Cattolico L."/>
            <person name="Weissenbach J."/>
            <person name="Saurin W."/>
            <person name="Quetier F."/>
            <person name="Schaefer M."/>
            <person name="Mueller-Auer S."/>
            <person name="Gabel C."/>
            <person name="Fuchs M."/>
            <person name="Benes V."/>
            <person name="Wurmbach E."/>
            <person name="Drzonek H."/>
            <person name="Erfle H."/>
            <person name="Jordan N."/>
            <person name="Bangert S."/>
            <person name="Wiedelmann R."/>
            <person name="Kranz H."/>
            <person name="Voss H."/>
            <person name="Holland R."/>
            <person name="Brandt P."/>
            <person name="Nyakatura G."/>
            <person name="Vezzi A."/>
            <person name="D'Angelo M."/>
            <person name="Pallavicini A."/>
            <person name="Toppo S."/>
            <person name="Simionati B."/>
            <person name="Conrad A."/>
            <person name="Hornischer K."/>
            <person name="Kauer G."/>
            <person name="Loehnert T.-H."/>
            <person name="Nordsiek G."/>
            <person name="Reichelt J."/>
            <person name="Scharfe M."/>
            <person name="Schoen O."/>
            <person name="Bargues M."/>
            <person name="Terol J."/>
            <person name="Climent J."/>
            <person name="Navarro P."/>
            <person name="Collado C."/>
            <person name="Perez-Perez A."/>
            <person name="Ottenwaelder B."/>
            <person name="Duchemin D."/>
            <person name="Cooke R."/>
            <person name="Laudie M."/>
            <person name="Berger-Llauro C."/>
            <person name="Purnelle B."/>
            <person name="Masuy D."/>
            <person name="de Haan M."/>
            <person name="Maarse A.C."/>
            <person name="Alcaraz J.-P."/>
            <person name="Cottet A."/>
            <person name="Casacuberta E."/>
            <person name="Monfort A."/>
            <person name="Argiriou A."/>
            <person name="Flores M."/>
            <person name="Liguori R."/>
            <person name="Vitale D."/>
            <person name="Mannhaupt G."/>
            <person name="Haase D."/>
            <person name="Schoof H."/>
            <person name="Rudd S."/>
            <person name="Zaccaria P."/>
            <person name="Mewes H.-W."/>
            <person name="Mayer K.F.X."/>
            <person name="Kaul S."/>
            <person name="Town C.D."/>
            <person name="Koo H.L."/>
            <person name="Tallon L.J."/>
            <person name="Jenkins J."/>
            <person name="Rooney T."/>
            <person name="Rizzo M."/>
            <person name="Walts A."/>
            <person name="Utterback T."/>
            <person name="Fujii C.Y."/>
            <person name="Shea T.P."/>
            <person name="Creasy T.H."/>
            <person name="Haas B."/>
            <person name="Maiti R."/>
            <person name="Wu D."/>
            <person name="Peterson J."/>
            <person name="Van Aken S."/>
            <person name="Pai G."/>
            <person name="Militscher J."/>
            <person name="Sellers P."/>
            <person name="Gill J.E."/>
            <person name="Feldblyum T.V."/>
            <person name="Preuss D."/>
            <person name="Lin X."/>
            <person name="Nierman W.C."/>
            <person name="Salzberg S.L."/>
            <person name="White O."/>
            <person name="Venter J.C."/>
            <person name="Fraser C.M."/>
            <person name="Kaneko T."/>
            <person name="Nakamura Y."/>
            <person name="Sato S."/>
            <person name="Kato T."/>
            <person name="Asamizu E."/>
            <person name="Sasamoto S."/>
            <person name="Kimura T."/>
            <person name="Idesawa K."/>
            <person name="Kawashima K."/>
            <person name="Kishida Y."/>
            <person name="Kiyokawa C."/>
            <person name="Kohara M."/>
            <person name="Matsumoto M."/>
            <person name="Matsuno A."/>
            <person name="Muraki A."/>
            <person name="Nakayama S."/>
            <person name="Nakazaki N."/>
            <person name="Shinpo S."/>
            <person name="Takeuchi C."/>
            <person name="Wada T."/>
            <person name="Watanabe A."/>
            <person name="Yamada M."/>
            <person name="Yasuda M."/>
            <person name="Tabata S."/>
        </authorList>
    </citation>
    <scope>NUCLEOTIDE SEQUENCE [LARGE SCALE GENOMIC DNA]</scope>
    <source>
        <strain>cv. Columbia</strain>
    </source>
</reference>
<reference key="2">
    <citation type="journal article" date="2017" name="Plant J.">
        <title>Araport11: a complete reannotation of the Arabidopsis thaliana reference genome.</title>
        <authorList>
            <person name="Cheng C.Y."/>
            <person name="Krishnakumar V."/>
            <person name="Chan A.P."/>
            <person name="Thibaud-Nissen F."/>
            <person name="Schobel S."/>
            <person name="Town C.D."/>
        </authorList>
    </citation>
    <scope>GENOME REANNOTATION</scope>
    <source>
        <strain>cv. Columbia</strain>
    </source>
</reference>
<reference key="3">
    <citation type="journal article" date="2003" name="Science">
        <title>Empirical analysis of transcriptional activity in the Arabidopsis genome.</title>
        <authorList>
            <person name="Yamada K."/>
            <person name="Lim J."/>
            <person name="Dale J.M."/>
            <person name="Chen H."/>
            <person name="Shinn P."/>
            <person name="Palm C.J."/>
            <person name="Southwick A.M."/>
            <person name="Wu H.C."/>
            <person name="Kim C.J."/>
            <person name="Nguyen M."/>
            <person name="Pham P.K."/>
            <person name="Cheuk R.F."/>
            <person name="Karlin-Newmann G."/>
            <person name="Liu S.X."/>
            <person name="Lam B."/>
            <person name="Sakano H."/>
            <person name="Wu T."/>
            <person name="Yu G."/>
            <person name="Miranda M."/>
            <person name="Quach H.L."/>
            <person name="Tripp M."/>
            <person name="Chang C.H."/>
            <person name="Lee J.M."/>
            <person name="Toriumi M.J."/>
            <person name="Chan M.M."/>
            <person name="Tang C.C."/>
            <person name="Onodera C.S."/>
            <person name="Deng J.M."/>
            <person name="Akiyama K."/>
            <person name="Ansari Y."/>
            <person name="Arakawa T."/>
            <person name="Banh J."/>
            <person name="Banno F."/>
            <person name="Bowser L."/>
            <person name="Brooks S.Y."/>
            <person name="Carninci P."/>
            <person name="Chao Q."/>
            <person name="Choy N."/>
            <person name="Enju A."/>
            <person name="Goldsmith A.D."/>
            <person name="Gurjal M."/>
            <person name="Hansen N.F."/>
            <person name="Hayashizaki Y."/>
            <person name="Johnson-Hopson C."/>
            <person name="Hsuan V.W."/>
            <person name="Iida K."/>
            <person name="Karnes M."/>
            <person name="Khan S."/>
            <person name="Koesema E."/>
            <person name="Ishida J."/>
            <person name="Jiang P.X."/>
            <person name="Jones T."/>
            <person name="Kawai J."/>
            <person name="Kamiya A."/>
            <person name="Meyers C."/>
            <person name="Nakajima M."/>
            <person name="Narusaka M."/>
            <person name="Seki M."/>
            <person name="Sakurai T."/>
            <person name="Satou M."/>
            <person name="Tamse R."/>
            <person name="Vaysberg M."/>
            <person name="Wallender E.K."/>
            <person name="Wong C."/>
            <person name="Yamamura Y."/>
            <person name="Yuan S."/>
            <person name="Shinozaki K."/>
            <person name="Davis R.W."/>
            <person name="Theologis A."/>
            <person name="Ecker J.R."/>
        </authorList>
    </citation>
    <scope>NUCLEOTIDE SEQUENCE [LARGE SCALE MRNA]</scope>
    <source>
        <strain>cv. Columbia</strain>
    </source>
</reference>
<reference key="4">
    <citation type="journal article" date="2002" name="Proc. Natl. Acad. Sci. U.S.A.">
        <title>The F-box subunit of the SCF E3 complex is encoded by a diverse superfamily of genes in Arabidopsis.</title>
        <authorList>
            <person name="Gagne J.M."/>
            <person name="Downes B.P."/>
            <person name="Shiu S.-H."/>
            <person name="Durski A.M."/>
            <person name="Vierstra R.D."/>
        </authorList>
    </citation>
    <scope>INTERACTION WITH SKP1A/ASK1; SKP1B/ASK2; ASK5; ASK11 AND ASK13</scope>
</reference>
<reference key="5">
    <citation type="journal article" date="2003" name="Plant J.">
        <title>Protein interaction analysis of SCF ubiquitin E3 ligase subunits from Arabidopsis.</title>
        <authorList>
            <person name="Risseeuw E.P."/>
            <person name="Daskalchuk T.E."/>
            <person name="Banks T.W."/>
            <person name="Liu E."/>
            <person name="Cotelesage J."/>
            <person name="Hellmann H."/>
            <person name="Estelle M."/>
            <person name="Somers D.E."/>
            <person name="Crosby W.L."/>
        </authorList>
    </citation>
    <scope>INTERACTION WITH SKPIA/ASK1 AND SKP1B/ASK2</scope>
</reference>
<reference key="6">
    <citation type="journal article" date="2003" name="Plant Physiol.">
        <title>Diversity of the superfamily of phloem lectins (phloem protein 2) in angiosperms.</title>
        <authorList>
            <person name="Dinant S."/>
            <person name="Clark A.M."/>
            <person name="Zhu Y."/>
            <person name="Vilaine F."/>
            <person name="Palauqui J.-C."/>
            <person name="Kusiak C."/>
            <person name="Thompson G.A."/>
        </authorList>
    </citation>
    <scope>GENE FAMILY</scope>
    <scope>NOMENCLATURE</scope>
</reference>
<evidence type="ECO:0000250" key="1"/>
<evidence type="ECO:0000255" key="2">
    <source>
        <dbReference type="PROSITE-ProRule" id="PRU00080"/>
    </source>
</evidence>
<evidence type="ECO:0000269" key="3">
    <source>
    </source>
</evidence>
<evidence type="ECO:0000269" key="4">
    <source>
    </source>
</evidence>
<evidence type="ECO:0000305" key="5"/>
<name>P2A13_ARATH</name>
<accession>Q9LEX0</accession>
<accession>Q3EAG4</accession>
<accession>Q94CC2</accession>
<protein>
    <recommendedName>
        <fullName>F-box protein PP2-A13</fullName>
    </recommendedName>
    <alternativeName>
        <fullName>Protein PHLOEM PROTEIN 2-LIKE A13</fullName>
        <shortName>AtPP2-A13</shortName>
    </alternativeName>
    <alternativeName>
        <fullName>SKP1-interacting partner 9</fullName>
    </alternativeName>
</protein>
<organism>
    <name type="scientific">Arabidopsis thaliana</name>
    <name type="common">Mouse-ear cress</name>
    <dbReference type="NCBI Taxonomy" id="3702"/>
    <lineage>
        <taxon>Eukaryota</taxon>
        <taxon>Viridiplantae</taxon>
        <taxon>Streptophyta</taxon>
        <taxon>Embryophyta</taxon>
        <taxon>Tracheophyta</taxon>
        <taxon>Spermatophyta</taxon>
        <taxon>Magnoliopsida</taxon>
        <taxon>eudicotyledons</taxon>
        <taxon>Gunneridae</taxon>
        <taxon>Pentapetalae</taxon>
        <taxon>rosids</taxon>
        <taxon>malvids</taxon>
        <taxon>Brassicales</taxon>
        <taxon>Brassicaceae</taxon>
        <taxon>Camelineae</taxon>
        <taxon>Arabidopsis</taxon>
    </lineage>
</organism>
<dbReference type="EMBL" id="AL358732">
    <property type="protein sequence ID" value="CAB94142.1"/>
    <property type="molecule type" value="Genomic_DNA"/>
</dbReference>
<dbReference type="EMBL" id="CP002686">
    <property type="protein sequence ID" value="AEE80147.1"/>
    <property type="molecule type" value="Genomic_DNA"/>
</dbReference>
<dbReference type="EMBL" id="AY034967">
    <property type="protein sequence ID" value="AAK59472.2"/>
    <property type="molecule type" value="mRNA"/>
</dbReference>
<dbReference type="EMBL" id="BT000895">
    <property type="protein sequence ID" value="AAN41295.1"/>
    <property type="molecule type" value="mRNA"/>
</dbReference>
<dbReference type="PIR" id="T50527">
    <property type="entry name" value="T50527"/>
</dbReference>
<dbReference type="RefSeq" id="NP_567108.2">
    <molecule id="Q9LEX0-1"/>
    <property type="nucleotide sequence ID" value="NM_115970.4"/>
</dbReference>
<dbReference type="SMR" id="Q9LEX0"/>
<dbReference type="BioGRID" id="10592">
    <property type="interactions" value="11"/>
</dbReference>
<dbReference type="FunCoup" id="Q9LEX0">
    <property type="interactions" value="138"/>
</dbReference>
<dbReference type="IntAct" id="Q9LEX0">
    <property type="interactions" value="8"/>
</dbReference>
<dbReference type="STRING" id="3702.Q9LEX0"/>
<dbReference type="PaxDb" id="3702-AT3G61060.2"/>
<dbReference type="DNASU" id="825278"/>
<dbReference type="EnsemblPlants" id="AT3G61060.1">
    <molecule id="Q9LEX0-1"/>
    <property type="protein sequence ID" value="AT3G61060.1"/>
    <property type="gene ID" value="AT3G61060"/>
</dbReference>
<dbReference type="Gramene" id="AT3G61060.1">
    <molecule id="Q9LEX0-1"/>
    <property type="protein sequence ID" value="AT3G61060.1"/>
    <property type="gene ID" value="AT3G61060"/>
</dbReference>
<dbReference type="KEGG" id="ath:AT3G61060"/>
<dbReference type="Araport" id="AT3G61060"/>
<dbReference type="TAIR" id="AT3G61060">
    <property type="gene designation" value="PP2-A13"/>
</dbReference>
<dbReference type="eggNOG" id="ENOG502QPMH">
    <property type="taxonomic scope" value="Eukaryota"/>
</dbReference>
<dbReference type="InParanoid" id="Q9LEX0"/>
<dbReference type="OrthoDB" id="9970274at2759"/>
<dbReference type="PhylomeDB" id="Q9LEX0"/>
<dbReference type="UniPathway" id="UPA00143"/>
<dbReference type="PRO" id="PR:Q9LEX0"/>
<dbReference type="Proteomes" id="UP000006548">
    <property type="component" value="Chromosome 3"/>
</dbReference>
<dbReference type="ExpressionAtlas" id="Q9LEX0">
    <property type="expression patterns" value="baseline and differential"/>
</dbReference>
<dbReference type="GO" id="GO:0005634">
    <property type="term" value="C:nucleus"/>
    <property type="evidence" value="ECO:0007669"/>
    <property type="project" value="UniProtKB-SubCell"/>
</dbReference>
<dbReference type="GO" id="GO:0016567">
    <property type="term" value="P:protein ubiquitination"/>
    <property type="evidence" value="ECO:0007669"/>
    <property type="project" value="UniProtKB-UniPathway"/>
</dbReference>
<dbReference type="CDD" id="cd22162">
    <property type="entry name" value="F-box_AtSKIP3-like"/>
    <property type="match status" value="1"/>
</dbReference>
<dbReference type="InterPro" id="IPR036047">
    <property type="entry name" value="F-box-like_dom_sf"/>
</dbReference>
<dbReference type="InterPro" id="IPR001810">
    <property type="entry name" value="F-box_dom"/>
</dbReference>
<dbReference type="InterPro" id="IPR025886">
    <property type="entry name" value="PP2-like"/>
</dbReference>
<dbReference type="PANTHER" id="PTHR31960:SF3">
    <property type="entry name" value="F-BOX PROTEIN PP2-A13"/>
    <property type="match status" value="1"/>
</dbReference>
<dbReference type="PANTHER" id="PTHR31960">
    <property type="entry name" value="F-BOX PROTEIN PP2-A15"/>
    <property type="match status" value="1"/>
</dbReference>
<dbReference type="Pfam" id="PF00646">
    <property type="entry name" value="F-box"/>
    <property type="match status" value="1"/>
</dbReference>
<dbReference type="Pfam" id="PF14299">
    <property type="entry name" value="PP2"/>
    <property type="match status" value="1"/>
</dbReference>
<dbReference type="SMART" id="SM00256">
    <property type="entry name" value="FBOX"/>
    <property type="match status" value="1"/>
</dbReference>
<dbReference type="SUPFAM" id="SSF81383">
    <property type="entry name" value="F-box domain"/>
    <property type="match status" value="1"/>
</dbReference>
<dbReference type="PROSITE" id="PS50181">
    <property type="entry name" value="FBOX"/>
    <property type="match status" value="1"/>
</dbReference>
<feature type="chain" id="PRO_0000272208" description="F-box protein PP2-A13">
    <location>
        <begin position="1"/>
        <end position="290"/>
    </location>
</feature>
<feature type="domain" description="F-box" evidence="2">
    <location>
        <begin position="21"/>
        <end position="67"/>
    </location>
</feature>
<feature type="sequence conflict" description="In Ref. 3; AAK59472." evidence="5" ref="3">
    <original>I</original>
    <variation>T</variation>
    <location>
        <position position="207"/>
    </location>
</feature>